<dbReference type="EMBL" id="CP001391">
    <property type="protein sequence ID" value="ACN94992.1"/>
    <property type="molecule type" value="Genomic_DNA"/>
</dbReference>
<dbReference type="RefSeq" id="WP_006279761.1">
    <property type="nucleotide sequence ID" value="NZ_MKIF01000121.1"/>
</dbReference>
<dbReference type="SMR" id="C0R5F0"/>
<dbReference type="STRING" id="66084.WRi_001460"/>
<dbReference type="GeneID" id="70035596"/>
<dbReference type="KEGG" id="wri:WRi_001460"/>
<dbReference type="HOGENOM" id="CLU_111574_0_0_5"/>
<dbReference type="Proteomes" id="UP000001293">
    <property type="component" value="Chromosome"/>
</dbReference>
<dbReference type="GO" id="GO:0005737">
    <property type="term" value="C:cytoplasm"/>
    <property type="evidence" value="ECO:0007669"/>
    <property type="project" value="UniProtKB-SubCell"/>
</dbReference>
<dbReference type="GO" id="GO:0051082">
    <property type="term" value="F:unfolded protein binding"/>
    <property type="evidence" value="ECO:0007669"/>
    <property type="project" value="InterPro"/>
</dbReference>
<dbReference type="GO" id="GO:0006457">
    <property type="term" value="P:protein folding"/>
    <property type="evidence" value="ECO:0007669"/>
    <property type="project" value="UniProtKB-UniRule"/>
</dbReference>
<dbReference type="GO" id="GO:0051262">
    <property type="term" value="P:protein tetramerization"/>
    <property type="evidence" value="ECO:0007669"/>
    <property type="project" value="InterPro"/>
</dbReference>
<dbReference type="GO" id="GO:0015031">
    <property type="term" value="P:protein transport"/>
    <property type="evidence" value="ECO:0007669"/>
    <property type="project" value="UniProtKB-UniRule"/>
</dbReference>
<dbReference type="Gene3D" id="3.10.420.10">
    <property type="entry name" value="SecB-like"/>
    <property type="match status" value="1"/>
</dbReference>
<dbReference type="HAMAP" id="MF_00821">
    <property type="entry name" value="SecB"/>
    <property type="match status" value="1"/>
</dbReference>
<dbReference type="InterPro" id="IPR003708">
    <property type="entry name" value="SecB"/>
</dbReference>
<dbReference type="InterPro" id="IPR035958">
    <property type="entry name" value="SecB-like_sf"/>
</dbReference>
<dbReference type="NCBIfam" id="NF004392">
    <property type="entry name" value="PRK05751.1-3"/>
    <property type="match status" value="1"/>
</dbReference>
<dbReference type="NCBIfam" id="TIGR00809">
    <property type="entry name" value="secB"/>
    <property type="match status" value="1"/>
</dbReference>
<dbReference type="PANTHER" id="PTHR36918">
    <property type="match status" value="1"/>
</dbReference>
<dbReference type="PANTHER" id="PTHR36918:SF1">
    <property type="entry name" value="PROTEIN-EXPORT PROTEIN SECB"/>
    <property type="match status" value="1"/>
</dbReference>
<dbReference type="Pfam" id="PF02556">
    <property type="entry name" value="SecB"/>
    <property type="match status" value="1"/>
</dbReference>
<dbReference type="SUPFAM" id="SSF54611">
    <property type="entry name" value="SecB-like"/>
    <property type="match status" value="1"/>
</dbReference>
<keyword id="KW-0143">Chaperone</keyword>
<keyword id="KW-0963">Cytoplasm</keyword>
<keyword id="KW-0653">Protein transport</keyword>
<keyword id="KW-0811">Translocation</keyword>
<keyword id="KW-0813">Transport</keyword>
<comment type="function">
    <text evidence="1">One of the proteins required for the normal export of preproteins out of the cell cytoplasm. It is a molecular chaperone that binds to a subset of precursor proteins, maintaining them in a translocation-competent state. It also specifically binds to its receptor SecA.</text>
</comment>
<comment type="subunit">
    <text evidence="1">Homotetramer, a dimer of dimers. One homotetramer interacts with 1 SecA dimer.</text>
</comment>
<comment type="subcellular location">
    <subcellularLocation>
        <location evidence="1">Cytoplasm</location>
    </subcellularLocation>
</comment>
<comment type="similarity">
    <text evidence="1">Belongs to the SecB family.</text>
</comment>
<evidence type="ECO:0000255" key="1">
    <source>
        <dbReference type="HAMAP-Rule" id="MF_00821"/>
    </source>
</evidence>
<protein>
    <recommendedName>
        <fullName evidence="1">Protein-export protein SecB</fullName>
    </recommendedName>
</protein>
<name>SECB_WOLWR</name>
<accession>C0R5F0</accession>
<gene>
    <name evidence="1" type="primary">secB</name>
    <name type="ordered locus">WRi_001460</name>
</gene>
<sequence length="167" mass="18796">MPQQKMRIHGQYVKDLSFENPNSPFLSSSKAPDINVMVNINSAKLEGTKNKEEVNEEKSFHEITLHIEVKATVKDEGIKDGVAFICETKYCGIFSIENLKELSEEEVRQALFIGGPTFLFPFAREIIARVTSSGGFPPLMLDPIDFETMYEQQGQQQKSNGSNSNFN</sequence>
<feature type="chain" id="PRO_1000148713" description="Protein-export protein SecB">
    <location>
        <begin position="1"/>
        <end position="167"/>
    </location>
</feature>
<reference key="1">
    <citation type="journal article" date="2009" name="Proc. Natl. Acad. Sci. U.S.A.">
        <title>The mosaic genome structure of the Wolbachia wRi strain infecting Drosophila simulans.</title>
        <authorList>
            <person name="Klasson L."/>
            <person name="Westberg J."/>
            <person name="Sapountzis P."/>
            <person name="Naeslund K."/>
            <person name="Lutnaes Y."/>
            <person name="Darby A.C."/>
            <person name="Veneti Z."/>
            <person name="Chen L."/>
            <person name="Braig H.R."/>
            <person name="Garrett R."/>
            <person name="Bourtzis K."/>
            <person name="Andersson S.G."/>
        </authorList>
    </citation>
    <scope>NUCLEOTIDE SEQUENCE [LARGE SCALE GENOMIC DNA]</scope>
    <source>
        <strain>wRi</strain>
    </source>
</reference>
<proteinExistence type="inferred from homology"/>
<organism>
    <name type="scientific">Wolbachia sp. subsp. Drosophila simulans (strain wRi)</name>
    <dbReference type="NCBI Taxonomy" id="66084"/>
    <lineage>
        <taxon>Bacteria</taxon>
        <taxon>Pseudomonadati</taxon>
        <taxon>Pseudomonadota</taxon>
        <taxon>Alphaproteobacteria</taxon>
        <taxon>Rickettsiales</taxon>
        <taxon>Anaplasmataceae</taxon>
        <taxon>Wolbachieae</taxon>
        <taxon>Wolbachia</taxon>
    </lineage>
</organism>